<accession>Q0TMN0</accession>
<reference key="1">
    <citation type="journal article" date="2006" name="Genome Res.">
        <title>Skewed genomic variability in strains of the toxigenic bacterial pathogen, Clostridium perfringens.</title>
        <authorList>
            <person name="Myers G.S.A."/>
            <person name="Rasko D.A."/>
            <person name="Cheung J.K."/>
            <person name="Ravel J."/>
            <person name="Seshadri R."/>
            <person name="DeBoy R.T."/>
            <person name="Ren Q."/>
            <person name="Varga J."/>
            <person name="Awad M.M."/>
            <person name="Brinkac L.M."/>
            <person name="Daugherty S.C."/>
            <person name="Haft D.H."/>
            <person name="Dodson R.J."/>
            <person name="Madupu R."/>
            <person name="Nelson W.C."/>
            <person name="Rosovitz M.J."/>
            <person name="Sullivan S.A."/>
            <person name="Khouri H."/>
            <person name="Dimitrov G.I."/>
            <person name="Watkins K.L."/>
            <person name="Mulligan S."/>
            <person name="Benton J."/>
            <person name="Radune D."/>
            <person name="Fisher D.J."/>
            <person name="Atkins H.S."/>
            <person name="Hiscox T."/>
            <person name="Jost B.H."/>
            <person name="Billington S.J."/>
            <person name="Songer J.G."/>
            <person name="McClane B.A."/>
            <person name="Titball R.W."/>
            <person name="Rood J.I."/>
            <person name="Melville S.B."/>
            <person name="Paulsen I.T."/>
        </authorList>
    </citation>
    <scope>NUCLEOTIDE SEQUENCE [LARGE SCALE GENOMIC DNA]</scope>
    <source>
        <strain>ATCC 13124 / DSM 756 / JCM 1290 / NCIMB 6125 / NCTC 8237 / S 107 / Type A</strain>
    </source>
</reference>
<dbReference type="EC" id="3.6.5.3" evidence="2"/>
<dbReference type="EMBL" id="CP000246">
    <property type="protein sequence ID" value="ABG83459.1"/>
    <property type="molecule type" value="Genomic_DNA"/>
</dbReference>
<dbReference type="EMBL" id="CP000246">
    <property type="protein sequence ID" value="ABG84911.1"/>
    <property type="molecule type" value="Genomic_DNA"/>
</dbReference>
<dbReference type="SMR" id="Q0TMN0"/>
<dbReference type="STRING" id="195103.CPF_2716"/>
<dbReference type="PaxDb" id="195103-CPF_2716"/>
<dbReference type="KEGG" id="cpf:CPF_2716"/>
<dbReference type="KEGG" id="cpf:CPF_2730"/>
<dbReference type="eggNOG" id="COG0050">
    <property type="taxonomic scope" value="Bacteria"/>
</dbReference>
<dbReference type="HOGENOM" id="CLU_007265_0_1_9"/>
<dbReference type="Proteomes" id="UP000001823">
    <property type="component" value="Chromosome"/>
</dbReference>
<dbReference type="GO" id="GO:0005829">
    <property type="term" value="C:cytosol"/>
    <property type="evidence" value="ECO:0007669"/>
    <property type="project" value="TreeGrafter"/>
</dbReference>
<dbReference type="GO" id="GO:0005525">
    <property type="term" value="F:GTP binding"/>
    <property type="evidence" value="ECO:0007669"/>
    <property type="project" value="UniProtKB-UniRule"/>
</dbReference>
<dbReference type="GO" id="GO:0003924">
    <property type="term" value="F:GTPase activity"/>
    <property type="evidence" value="ECO:0007669"/>
    <property type="project" value="InterPro"/>
</dbReference>
<dbReference type="GO" id="GO:0003746">
    <property type="term" value="F:translation elongation factor activity"/>
    <property type="evidence" value="ECO:0007669"/>
    <property type="project" value="UniProtKB-UniRule"/>
</dbReference>
<dbReference type="CDD" id="cd01884">
    <property type="entry name" value="EF_Tu"/>
    <property type="match status" value="1"/>
</dbReference>
<dbReference type="CDD" id="cd03697">
    <property type="entry name" value="EFTU_II"/>
    <property type="match status" value="1"/>
</dbReference>
<dbReference type="CDD" id="cd03707">
    <property type="entry name" value="EFTU_III"/>
    <property type="match status" value="1"/>
</dbReference>
<dbReference type="FunFam" id="2.40.30.10:FF:000001">
    <property type="entry name" value="Elongation factor Tu"/>
    <property type="match status" value="1"/>
</dbReference>
<dbReference type="FunFam" id="3.40.50.300:FF:000003">
    <property type="entry name" value="Elongation factor Tu"/>
    <property type="match status" value="1"/>
</dbReference>
<dbReference type="Gene3D" id="3.40.50.300">
    <property type="entry name" value="P-loop containing nucleotide triphosphate hydrolases"/>
    <property type="match status" value="1"/>
</dbReference>
<dbReference type="Gene3D" id="2.40.30.10">
    <property type="entry name" value="Translation factors"/>
    <property type="match status" value="2"/>
</dbReference>
<dbReference type="HAMAP" id="MF_00118_B">
    <property type="entry name" value="EF_Tu_B"/>
    <property type="match status" value="1"/>
</dbReference>
<dbReference type="InterPro" id="IPR041709">
    <property type="entry name" value="EF-Tu_GTP-bd"/>
</dbReference>
<dbReference type="InterPro" id="IPR050055">
    <property type="entry name" value="EF-Tu_GTPase"/>
</dbReference>
<dbReference type="InterPro" id="IPR004161">
    <property type="entry name" value="EFTu-like_2"/>
</dbReference>
<dbReference type="InterPro" id="IPR033720">
    <property type="entry name" value="EFTU_2"/>
</dbReference>
<dbReference type="InterPro" id="IPR031157">
    <property type="entry name" value="G_TR_CS"/>
</dbReference>
<dbReference type="InterPro" id="IPR027417">
    <property type="entry name" value="P-loop_NTPase"/>
</dbReference>
<dbReference type="InterPro" id="IPR005225">
    <property type="entry name" value="Small_GTP-bd"/>
</dbReference>
<dbReference type="InterPro" id="IPR000795">
    <property type="entry name" value="T_Tr_GTP-bd_dom"/>
</dbReference>
<dbReference type="InterPro" id="IPR009000">
    <property type="entry name" value="Transl_B-barrel_sf"/>
</dbReference>
<dbReference type="InterPro" id="IPR009001">
    <property type="entry name" value="Transl_elong_EF1A/Init_IF2_C"/>
</dbReference>
<dbReference type="InterPro" id="IPR004541">
    <property type="entry name" value="Transl_elong_EFTu/EF1A_bac/org"/>
</dbReference>
<dbReference type="InterPro" id="IPR004160">
    <property type="entry name" value="Transl_elong_EFTu/EF1A_C"/>
</dbReference>
<dbReference type="NCBIfam" id="TIGR00485">
    <property type="entry name" value="EF-Tu"/>
    <property type="match status" value="1"/>
</dbReference>
<dbReference type="NCBIfam" id="NF000766">
    <property type="entry name" value="PRK00049.1"/>
    <property type="match status" value="1"/>
</dbReference>
<dbReference type="NCBIfam" id="NF009372">
    <property type="entry name" value="PRK12735.1"/>
    <property type="match status" value="1"/>
</dbReference>
<dbReference type="NCBIfam" id="NF009373">
    <property type="entry name" value="PRK12736.1"/>
    <property type="match status" value="1"/>
</dbReference>
<dbReference type="NCBIfam" id="TIGR00231">
    <property type="entry name" value="small_GTP"/>
    <property type="match status" value="1"/>
</dbReference>
<dbReference type="PANTHER" id="PTHR43721:SF22">
    <property type="entry name" value="ELONGATION FACTOR TU, MITOCHONDRIAL"/>
    <property type="match status" value="1"/>
</dbReference>
<dbReference type="PANTHER" id="PTHR43721">
    <property type="entry name" value="ELONGATION FACTOR TU-RELATED"/>
    <property type="match status" value="1"/>
</dbReference>
<dbReference type="Pfam" id="PF00009">
    <property type="entry name" value="GTP_EFTU"/>
    <property type="match status" value="1"/>
</dbReference>
<dbReference type="Pfam" id="PF03144">
    <property type="entry name" value="GTP_EFTU_D2"/>
    <property type="match status" value="1"/>
</dbReference>
<dbReference type="Pfam" id="PF03143">
    <property type="entry name" value="GTP_EFTU_D3"/>
    <property type="match status" value="1"/>
</dbReference>
<dbReference type="PRINTS" id="PR00315">
    <property type="entry name" value="ELONGATNFCT"/>
</dbReference>
<dbReference type="SUPFAM" id="SSF50465">
    <property type="entry name" value="EF-Tu/eEF-1alpha/eIF2-gamma C-terminal domain"/>
    <property type="match status" value="1"/>
</dbReference>
<dbReference type="SUPFAM" id="SSF52540">
    <property type="entry name" value="P-loop containing nucleoside triphosphate hydrolases"/>
    <property type="match status" value="1"/>
</dbReference>
<dbReference type="SUPFAM" id="SSF50447">
    <property type="entry name" value="Translation proteins"/>
    <property type="match status" value="1"/>
</dbReference>
<dbReference type="PROSITE" id="PS00301">
    <property type="entry name" value="G_TR_1"/>
    <property type="match status" value="1"/>
</dbReference>
<dbReference type="PROSITE" id="PS51722">
    <property type="entry name" value="G_TR_2"/>
    <property type="match status" value="1"/>
</dbReference>
<feature type="chain" id="PRO_0000337364" description="Elongation factor Tu">
    <location>
        <begin position="1"/>
        <end position="397"/>
    </location>
</feature>
<feature type="domain" description="tr-type G">
    <location>
        <begin position="10"/>
        <end position="206"/>
    </location>
</feature>
<feature type="region of interest" description="G1" evidence="1">
    <location>
        <begin position="19"/>
        <end position="26"/>
    </location>
</feature>
<feature type="region of interest" description="G2" evidence="1">
    <location>
        <begin position="60"/>
        <end position="64"/>
    </location>
</feature>
<feature type="region of interest" description="G3" evidence="1">
    <location>
        <begin position="81"/>
        <end position="84"/>
    </location>
</feature>
<feature type="region of interest" description="G4" evidence="1">
    <location>
        <begin position="136"/>
        <end position="139"/>
    </location>
</feature>
<feature type="region of interest" description="G5" evidence="1">
    <location>
        <begin position="174"/>
        <end position="176"/>
    </location>
</feature>
<feature type="binding site" evidence="2">
    <location>
        <begin position="19"/>
        <end position="26"/>
    </location>
    <ligand>
        <name>GTP</name>
        <dbReference type="ChEBI" id="CHEBI:37565"/>
    </ligand>
</feature>
<feature type="binding site" evidence="2">
    <location>
        <position position="26"/>
    </location>
    <ligand>
        <name>Mg(2+)</name>
        <dbReference type="ChEBI" id="CHEBI:18420"/>
    </ligand>
</feature>
<feature type="binding site" evidence="2">
    <location>
        <begin position="81"/>
        <end position="85"/>
    </location>
    <ligand>
        <name>GTP</name>
        <dbReference type="ChEBI" id="CHEBI:37565"/>
    </ligand>
</feature>
<feature type="binding site" evidence="2">
    <location>
        <begin position="136"/>
        <end position="139"/>
    </location>
    <ligand>
        <name>GTP</name>
        <dbReference type="ChEBI" id="CHEBI:37565"/>
    </ligand>
</feature>
<comment type="function">
    <text evidence="2">GTP hydrolase that promotes the GTP-dependent binding of aminoacyl-tRNA to the A-site of ribosomes during protein biosynthesis.</text>
</comment>
<comment type="catalytic activity">
    <reaction evidence="2">
        <text>GTP + H2O = GDP + phosphate + H(+)</text>
        <dbReference type="Rhea" id="RHEA:19669"/>
        <dbReference type="ChEBI" id="CHEBI:15377"/>
        <dbReference type="ChEBI" id="CHEBI:15378"/>
        <dbReference type="ChEBI" id="CHEBI:37565"/>
        <dbReference type="ChEBI" id="CHEBI:43474"/>
        <dbReference type="ChEBI" id="CHEBI:58189"/>
        <dbReference type="EC" id="3.6.5.3"/>
    </reaction>
    <physiologicalReaction direction="left-to-right" evidence="2">
        <dbReference type="Rhea" id="RHEA:19670"/>
    </physiologicalReaction>
</comment>
<comment type="subunit">
    <text evidence="2">Monomer.</text>
</comment>
<comment type="subcellular location">
    <subcellularLocation>
        <location evidence="2">Cytoplasm</location>
    </subcellularLocation>
</comment>
<comment type="similarity">
    <text evidence="2">Belongs to the TRAFAC class translation factor GTPase superfamily. Classic translation factor GTPase family. EF-Tu/EF-1A subfamily.</text>
</comment>
<evidence type="ECO:0000250" key="1"/>
<evidence type="ECO:0000255" key="2">
    <source>
        <dbReference type="HAMAP-Rule" id="MF_00118"/>
    </source>
</evidence>
<sequence>MSKAKFERSKPHVNIGTIGHVDHGKTTLTAAITTVLAQAGGAEAFKYDEIDKAPEEKERGITINTAHVEYETANRHYAHVDCPGHADYVKNMITGAAQMDGAILVCSAADGPMPQTREHILLSSRVGVDHIVVFLNKADMVDDEELLELVEMEVRELLSEYNFPGDDIPVIKGSALVALENPTDEAATACIRELMDAVDSYIPTPERATDKPFLMPVEDVFTITGRGTVATGRVERGVLHVGDEVEVIGLTEERRKTVVTGIEMFRKLLDEAQAGDNIGALLRGIQRTDIERGQVLAQVGTINPHKKFVGQVYVLKKEEGGRHTPFFDGYRPQFYFRTTDVTGSIKLPEGMEMVMPGDHIDMEVELITEIAMDEGLRFAIREGGRTVGSGVVTSIIE</sequence>
<name>EFTU_CLOP1</name>
<keyword id="KW-0963">Cytoplasm</keyword>
<keyword id="KW-0251">Elongation factor</keyword>
<keyword id="KW-0342">GTP-binding</keyword>
<keyword id="KW-0378">Hydrolase</keyword>
<keyword id="KW-0460">Magnesium</keyword>
<keyword id="KW-0479">Metal-binding</keyword>
<keyword id="KW-0547">Nucleotide-binding</keyword>
<keyword id="KW-0648">Protein biosynthesis</keyword>
<gene>
    <name evidence="2" type="primary">tuf1</name>
    <name type="ordered locus">CPF_2716</name>
</gene>
<gene>
    <name evidence="2" type="primary">tuf2</name>
    <name type="ordered locus">CPF_2730</name>
</gene>
<organism>
    <name type="scientific">Clostridium perfringens (strain ATCC 13124 / DSM 756 / JCM 1290 / NCIMB 6125 / NCTC 8237 / Type A)</name>
    <dbReference type="NCBI Taxonomy" id="195103"/>
    <lineage>
        <taxon>Bacteria</taxon>
        <taxon>Bacillati</taxon>
        <taxon>Bacillota</taxon>
        <taxon>Clostridia</taxon>
        <taxon>Eubacteriales</taxon>
        <taxon>Clostridiaceae</taxon>
        <taxon>Clostridium</taxon>
    </lineage>
</organism>
<proteinExistence type="inferred from homology"/>
<protein>
    <recommendedName>
        <fullName evidence="2">Elongation factor Tu</fullName>
        <shortName evidence="2">EF-Tu</shortName>
        <ecNumber evidence="2">3.6.5.3</ecNumber>
    </recommendedName>
</protein>